<keyword id="KW-0067">ATP-binding</keyword>
<keyword id="KW-0963">Cytoplasm</keyword>
<keyword id="KW-0418">Kinase</keyword>
<keyword id="KW-0547">Nucleotide-binding</keyword>
<keyword id="KW-1185">Reference proteome</keyword>
<keyword id="KW-0808">Transferase</keyword>
<comment type="catalytic activity">
    <reaction evidence="1">
        <text>butanoate + ATP = butanoyl phosphate + ADP</text>
        <dbReference type="Rhea" id="RHEA:13585"/>
        <dbReference type="ChEBI" id="CHEBI:17968"/>
        <dbReference type="ChEBI" id="CHEBI:30616"/>
        <dbReference type="ChEBI" id="CHEBI:58079"/>
        <dbReference type="ChEBI" id="CHEBI:456216"/>
        <dbReference type="EC" id="2.7.2.7"/>
    </reaction>
</comment>
<comment type="subcellular location">
    <subcellularLocation>
        <location evidence="1">Cytoplasm</location>
    </subcellularLocation>
</comment>
<comment type="similarity">
    <text evidence="1">Belongs to the acetokinase family.</text>
</comment>
<protein>
    <recommendedName>
        <fullName evidence="1">Probable butyrate kinase</fullName>
        <shortName evidence="1">BK</shortName>
        <ecNumber evidence="1">2.7.2.7</ecNumber>
    </recommendedName>
    <alternativeName>
        <fullName evidence="1">Branched-chain carboxylic acid kinase</fullName>
    </alternativeName>
</protein>
<sequence length="355" mass="38970">MSFDVLTINPGSTSTKLAVYQGDKVLFEETVRHTMQELADFNNVQEQFDFRWQVLRRVMDAHGYDVKKLQAVVGRGGLLRPVAGGTYMVTEKMIDDLKENKYGEHASNLGAMLAKKLADELTIPSFIVDPVVVDEMQEIARISGNAFVTRKSIFHALNHKAAGRKIAKELGKDYEKMNFVIAHLGGGISVAAHRQGKAVDVNNALDGDGPFSPERSGSLPMNDFLEACFSGKWTKRELHELIVGRGGMISYLGTNSMLEVEAKVQAGEEKAIEAFDAMAYQVSKEIGACSVVLQGKVDAIILTGGLARSELFTSKIIEQTNWITSVIIEPGEDELEALNSGVQRVLAGLEKEKEY</sequence>
<evidence type="ECO:0000255" key="1">
    <source>
        <dbReference type="HAMAP-Rule" id="MF_00542"/>
    </source>
</evidence>
<name>BUK_LISMO</name>
<organism>
    <name type="scientific">Listeria monocytogenes serovar 1/2a (strain ATCC BAA-679 / EGD-e)</name>
    <dbReference type="NCBI Taxonomy" id="169963"/>
    <lineage>
        <taxon>Bacteria</taxon>
        <taxon>Bacillati</taxon>
        <taxon>Bacillota</taxon>
        <taxon>Bacilli</taxon>
        <taxon>Bacillales</taxon>
        <taxon>Listeriaceae</taxon>
        <taxon>Listeria</taxon>
    </lineage>
</organism>
<proteinExistence type="inferred from homology"/>
<accession>Q8Y7B6</accession>
<reference key="1">
    <citation type="journal article" date="2001" name="Science">
        <title>Comparative genomics of Listeria species.</title>
        <authorList>
            <person name="Glaser P."/>
            <person name="Frangeul L."/>
            <person name="Buchrieser C."/>
            <person name="Rusniok C."/>
            <person name="Amend A."/>
            <person name="Baquero F."/>
            <person name="Berche P."/>
            <person name="Bloecker H."/>
            <person name="Brandt P."/>
            <person name="Chakraborty T."/>
            <person name="Charbit A."/>
            <person name="Chetouani F."/>
            <person name="Couve E."/>
            <person name="de Daruvar A."/>
            <person name="Dehoux P."/>
            <person name="Domann E."/>
            <person name="Dominguez-Bernal G."/>
            <person name="Duchaud E."/>
            <person name="Durant L."/>
            <person name="Dussurget O."/>
            <person name="Entian K.-D."/>
            <person name="Fsihi H."/>
            <person name="Garcia-del Portillo F."/>
            <person name="Garrido P."/>
            <person name="Gautier L."/>
            <person name="Goebel W."/>
            <person name="Gomez-Lopez N."/>
            <person name="Hain T."/>
            <person name="Hauf J."/>
            <person name="Jackson D."/>
            <person name="Jones L.-M."/>
            <person name="Kaerst U."/>
            <person name="Kreft J."/>
            <person name="Kuhn M."/>
            <person name="Kunst F."/>
            <person name="Kurapkat G."/>
            <person name="Madueno E."/>
            <person name="Maitournam A."/>
            <person name="Mata Vicente J."/>
            <person name="Ng E."/>
            <person name="Nedjari H."/>
            <person name="Nordsiek G."/>
            <person name="Novella S."/>
            <person name="de Pablos B."/>
            <person name="Perez-Diaz J.-C."/>
            <person name="Purcell R."/>
            <person name="Remmel B."/>
            <person name="Rose M."/>
            <person name="Schlueter T."/>
            <person name="Simoes N."/>
            <person name="Tierrez A."/>
            <person name="Vazquez-Boland J.-A."/>
            <person name="Voss H."/>
            <person name="Wehland J."/>
            <person name="Cossart P."/>
        </authorList>
    </citation>
    <scope>NUCLEOTIDE SEQUENCE [LARGE SCALE GENOMIC DNA]</scope>
    <source>
        <strain>ATCC BAA-679 / EGD-e</strain>
    </source>
</reference>
<dbReference type="EC" id="2.7.2.7" evidence="1"/>
<dbReference type="EMBL" id="AL591978">
    <property type="protein sequence ID" value="CAC99448.1"/>
    <property type="molecule type" value="Genomic_DNA"/>
</dbReference>
<dbReference type="PIR" id="AB1246">
    <property type="entry name" value="AB1246"/>
</dbReference>
<dbReference type="RefSeq" id="NP_464895.1">
    <property type="nucleotide sequence ID" value="NC_003210.1"/>
</dbReference>
<dbReference type="RefSeq" id="WP_003722496.1">
    <property type="nucleotide sequence ID" value="NZ_CP149495.1"/>
</dbReference>
<dbReference type="SMR" id="Q8Y7B6"/>
<dbReference type="STRING" id="169963.gene:17594027"/>
<dbReference type="PaxDb" id="169963-lmo1370"/>
<dbReference type="EnsemblBacteria" id="CAC99448">
    <property type="protein sequence ID" value="CAC99448"/>
    <property type="gene ID" value="CAC99448"/>
</dbReference>
<dbReference type="GeneID" id="987676"/>
<dbReference type="KEGG" id="lmo:lmo1370"/>
<dbReference type="PATRIC" id="fig|169963.11.peg.1407"/>
<dbReference type="eggNOG" id="COG3426">
    <property type="taxonomic scope" value="Bacteria"/>
</dbReference>
<dbReference type="HOGENOM" id="CLU_048716_0_0_9"/>
<dbReference type="OrthoDB" id="9771859at2"/>
<dbReference type="PhylomeDB" id="Q8Y7B6"/>
<dbReference type="BioCyc" id="LMON169963:LMO1370-MONOMER"/>
<dbReference type="Proteomes" id="UP000000817">
    <property type="component" value="Chromosome"/>
</dbReference>
<dbReference type="GO" id="GO:0005737">
    <property type="term" value="C:cytoplasm"/>
    <property type="evidence" value="ECO:0007669"/>
    <property type="project" value="UniProtKB-SubCell"/>
</dbReference>
<dbReference type="GO" id="GO:0008776">
    <property type="term" value="F:acetate kinase activity"/>
    <property type="evidence" value="ECO:0000318"/>
    <property type="project" value="GO_Central"/>
</dbReference>
<dbReference type="GO" id="GO:0005524">
    <property type="term" value="F:ATP binding"/>
    <property type="evidence" value="ECO:0007669"/>
    <property type="project" value="UniProtKB-KW"/>
</dbReference>
<dbReference type="GO" id="GO:0047761">
    <property type="term" value="F:butyrate kinase activity"/>
    <property type="evidence" value="ECO:0007669"/>
    <property type="project" value="UniProtKB-UniRule"/>
</dbReference>
<dbReference type="GO" id="GO:0006083">
    <property type="term" value="P:acetate metabolic process"/>
    <property type="evidence" value="ECO:0000318"/>
    <property type="project" value="GO_Central"/>
</dbReference>
<dbReference type="CDD" id="cd24011">
    <property type="entry name" value="ASKHA_NBD_BK"/>
    <property type="match status" value="1"/>
</dbReference>
<dbReference type="FunFam" id="3.30.420.40:FF:000233">
    <property type="entry name" value="Probable butyrate kinase"/>
    <property type="match status" value="1"/>
</dbReference>
<dbReference type="Gene3D" id="3.30.420.40">
    <property type="match status" value="2"/>
</dbReference>
<dbReference type="HAMAP" id="MF_00542">
    <property type="entry name" value="Butyrate_kinase"/>
    <property type="match status" value="1"/>
</dbReference>
<dbReference type="InterPro" id="IPR000890">
    <property type="entry name" value="Aliphatic_acid_kin_short-chain"/>
</dbReference>
<dbReference type="InterPro" id="IPR023865">
    <property type="entry name" value="Aliphatic_acid_kinase_CS"/>
</dbReference>
<dbReference type="InterPro" id="IPR043129">
    <property type="entry name" value="ATPase_NBD"/>
</dbReference>
<dbReference type="InterPro" id="IPR011245">
    <property type="entry name" value="Butyrate_kin"/>
</dbReference>
<dbReference type="NCBIfam" id="TIGR02707">
    <property type="entry name" value="butyr_kinase"/>
    <property type="match status" value="1"/>
</dbReference>
<dbReference type="NCBIfam" id="NF002834">
    <property type="entry name" value="PRK03011.1-5"/>
    <property type="match status" value="1"/>
</dbReference>
<dbReference type="PANTHER" id="PTHR21060">
    <property type="entry name" value="ACETATE KINASE"/>
    <property type="match status" value="1"/>
</dbReference>
<dbReference type="PANTHER" id="PTHR21060:SF3">
    <property type="entry name" value="BUTYRATE KINASE 2-RELATED"/>
    <property type="match status" value="1"/>
</dbReference>
<dbReference type="Pfam" id="PF00871">
    <property type="entry name" value="Acetate_kinase"/>
    <property type="match status" value="1"/>
</dbReference>
<dbReference type="PIRSF" id="PIRSF036458">
    <property type="entry name" value="Butyrate_kin"/>
    <property type="match status" value="1"/>
</dbReference>
<dbReference type="PRINTS" id="PR00471">
    <property type="entry name" value="ACETATEKNASE"/>
</dbReference>
<dbReference type="SUPFAM" id="SSF53067">
    <property type="entry name" value="Actin-like ATPase domain"/>
    <property type="match status" value="2"/>
</dbReference>
<dbReference type="PROSITE" id="PS01075">
    <property type="entry name" value="ACETATE_KINASE_1"/>
    <property type="match status" value="1"/>
</dbReference>
<dbReference type="PROSITE" id="PS01076">
    <property type="entry name" value="ACETATE_KINASE_2"/>
    <property type="match status" value="1"/>
</dbReference>
<gene>
    <name evidence="1" type="primary">buk</name>
    <name type="ordered locus">lmo1370</name>
</gene>
<feature type="chain" id="PRO_0000107672" description="Probable butyrate kinase">
    <location>
        <begin position="1"/>
        <end position="355"/>
    </location>
</feature>